<sequence>MATSTTTSLKEFLSVFPQLVADLRALCLEEYQLPACVWDRFESTLNHNTLGGKCNRGLSVIDSVRLLRDGLELSPAEYFDAAVLGWLVELLQATMLVLDDIMDGSPTRRGKPSWYRVPGVGMAAVNDATMLESAIYMLLKKYFAGRAIYLPVVDLFHETALQIELGQAFDMLIANEGTPDLTTFVPATYSQIVTYKTAFYSFYLPVALALHAVDAATPTNLAAARAILVPMGEYFQVQDDYLDCFADPTVLGKVGTDIIEGKCSWLVVQALQRASTDQAQLLAENYGSASGESSVKALYSELDLESVYRTFEEQRVAELRTLITGLDESQGLRKSVFEELLGKIYQRRK</sequence>
<evidence type="ECO:0000250" key="1">
    <source>
        <dbReference type="UniProtKB" id="P08524"/>
    </source>
</evidence>
<evidence type="ECO:0000250" key="2">
    <source>
        <dbReference type="UniProtKB" id="P14324"/>
    </source>
</evidence>
<evidence type="ECO:0000269" key="3">
    <source>
    </source>
</evidence>
<evidence type="ECO:0000269" key="4">
    <source>
    </source>
</evidence>
<evidence type="ECO:0000269" key="5">
    <source>
    </source>
</evidence>
<evidence type="ECO:0000269" key="6">
    <source>
    </source>
</evidence>
<evidence type="ECO:0000303" key="7">
    <source>
    </source>
</evidence>
<evidence type="ECO:0000305" key="8"/>
<comment type="function">
    <text evidence="4 5">Farnesyl pyrophosphate synthase; part of the gene cluster that mediates the biosynthesis of viridicatumtoxin, a tetracycline-like fungal meroterpenoid with a unique, fused spirobicyclic ring system (PubMed:20534346). The first step of the pathway is the production of the malonamoyl-CoA starter unit for the polyketide synthase vrtA (PubMed:20534346). The aldolase vrtJ may be involved in the synthesis of the malonamate substrate for malonamoyl-CoA synthetase vrtB (PubMed:20534346). The polyketide synthase vrtA then may utilize the malonamoyl-CoA starter unit, followed by sequential condensation of eight malonyl-CoA units to form the polyketide backbone (PubMed:20534346). The cyclization of the last ring could be mediated by the lactamase-like protein vrtG (PubMed:20534346). The proposed post-PKS tailoring steps are a hydroxylation at C5 catalyzed the cytochrome P450 monooxygenase vrtE, a hydroxylation at C12a catalyzed by VrtH and/or VrtI, and an O-methylation by the O-methyltransferase vrtF (PubMed:20534346, PubMed:24161266). VrtC is then proposed to catalyze the transfer of a geranyl group synthesized by vrtD to the aromatic C ring of the tetracyclic polyketide intermediate of viridicatumtoxin to yield previridicatumtoxin (PubMed:20534346). Finally, the cytochrome P450 monooxygenase vrtK catalyzes the spirocyclization of the geranyl moiety of previridicatumtoxin to afford viridicatumtoxin (PubMed:24161266).</text>
</comment>
<comment type="catalytic activity">
    <reaction evidence="2">
        <text>isopentenyl diphosphate + dimethylallyl diphosphate = (2E)-geranyl diphosphate + diphosphate</text>
        <dbReference type="Rhea" id="RHEA:22408"/>
        <dbReference type="ChEBI" id="CHEBI:33019"/>
        <dbReference type="ChEBI" id="CHEBI:57623"/>
        <dbReference type="ChEBI" id="CHEBI:58057"/>
        <dbReference type="ChEBI" id="CHEBI:128769"/>
        <dbReference type="EC" id="2.5.1.1"/>
    </reaction>
</comment>
<comment type="catalytic activity">
    <reaction evidence="2">
        <text>isopentenyl diphosphate + (2E)-geranyl diphosphate = (2E,6E)-farnesyl diphosphate + diphosphate</text>
        <dbReference type="Rhea" id="RHEA:19361"/>
        <dbReference type="ChEBI" id="CHEBI:33019"/>
        <dbReference type="ChEBI" id="CHEBI:58057"/>
        <dbReference type="ChEBI" id="CHEBI:128769"/>
        <dbReference type="ChEBI" id="CHEBI:175763"/>
        <dbReference type="EC" id="2.5.1.10"/>
    </reaction>
</comment>
<comment type="cofactor">
    <cofactor evidence="2">
        <name>Mg(2+)</name>
        <dbReference type="ChEBI" id="CHEBI:18420"/>
    </cofactor>
    <text evidence="2">Binds 2 Mg(2+) ions per subunit.</text>
</comment>
<comment type="pathway">
    <text evidence="4">Secondary metabolite biosynthesis; terpenoid biosynthesis.</text>
</comment>
<comment type="biotechnology">
    <text evidence="3 6">Viridicatumtoxin and its derivative, viridicatumtoxin B, exhibit anti-methicillin-resistant Staphylococcus aureus (anti-MRSA) activity (PubMed:19168978). Moreover, viridicatumtoxin and a C2 acetyl analog, spirohexaline, have been demonstrated to inhibit bacterial undecaprenyl diphosphate synthase, a potential new target for antibiotic development (PubMed:27049441).</text>
</comment>
<comment type="similarity">
    <text evidence="8">Belongs to the FPP/GGPP synthase family.</text>
</comment>
<reference key="1">
    <citation type="journal article" date="2010" name="Chem. Biol.">
        <title>Identification of the viridicatumtoxin and griseofulvin gene clusters from Penicillium aethiopicum.</title>
        <authorList>
            <person name="Chooi Y.H."/>
            <person name="Cacho R."/>
            <person name="Tang Y."/>
        </authorList>
    </citation>
    <scope>NUCLEOTIDE SEQUENCE [GENOMIC DNA]</scope>
    <scope>FUNCTION</scope>
    <source>
        <strain>IBT 5753</strain>
    </source>
</reference>
<reference key="2">
    <citation type="journal article" date="2008" name="J. Antibiot.">
        <title>Viridicatumtoxin B, a new anti-MRSA agent from Penicillium sp. FR11.</title>
        <authorList>
            <person name="Zheng C.J."/>
            <person name="Yu H.E."/>
            <person name="Kim E.H."/>
            <person name="Kim W.G."/>
        </authorList>
    </citation>
    <scope>BIOTECHNOLOGY</scope>
</reference>
<reference key="3">
    <citation type="journal article" date="2013" name="J. Am. Chem. Soc.">
        <title>A cytochrome P450 serves as an unexpected terpene cyclase during fungal meroterpenoid biosynthesis.</title>
        <authorList>
            <person name="Chooi Y.H."/>
            <person name="Hong Y.J."/>
            <person name="Cacho R.A."/>
            <person name="Tantillo D.J."/>
            <person name="Tang Y."/>
        </authorList>
    </citation>
    <scope>FUNCTION</scope>
</reference>
<reference key="4">
    <citation type="journal article" date="2016" name="J. Antibiot.">
        <title>Inhibition of bacterial undecaprenyl pyrophosphate synthase by small fungal molecules.</title>
        <authorList>
            <person name="Inokoshi J."/>
            <person name="Nakamura Y."/>
            <person name="Komada S."/>
            <person name="Komatsu K."/>
            <person name="Umeyama H."/>
            <person name="Tomoda H."/>
        </authorList>
    </citation>
    <scope>BIOTECHNOLOGY</scope>
</reference>
<feature type="chain" id="PRO_0000436827" description="Farnesyl pyrophosphate synthase vrtD">
    <location>
        <begin position="1"/>
        <end position="349"/>
    </location>
</feature>
<feature type="binding site" evidence="2">
    <location>
        <position position="53"/>
    </location>
    <ligand>
        <name>isopentenyl diphosphate</name>
        <dbReference type="ChEBI" id="CHEBI:128769"/>
    </ligand>
</feature>
<feature type="binding site" evidence="2">
    <location>
        <position position="56"/>
    </location>
    <ligand>
        <name>isopentenyl diphosphate</name>
        <dbReference type="ChEBI" id="CHEBI:128769"/>
    </ligand>
</feature>
<feature type="binding site" evidence="2">
    <location>
        <position position="92"/>
    </location>
    <ligand>
        <name>isopentenyl diphosphate</name>
        <dbReference type="ChEBI" id="CHEBI:128769"/>
    </ligand>
</feature>
<feature type="binding site" evidence="2">
    <location>
        <position position="99"/>
    </location>
    <ligand>
        <name>Mg(2+)</name>
        <dbReference type="ChEBI" id="CHEBI:18420"/>
        <label>1</label>
    </ligand>
</feature>
<feature type="binding site" evidence="2">
    <location>
        <position position="99"/>
    </location>
    <ligand>
        <name>Mg(2+)</name>
        <dbReference type="ChEBI" id="CHEBI:18420"/>
        <label>2</label>
    </ligand>
</feature>
<feature type="binding site" evidence="2">
    <location>
        <position position="103"/>
    </location>
    <ligand>
        <name>Mg(2+)</name>
        <dbReference type="ChEBI" id="CHEBI:18420"/>
        <label>1</label>
    </ligand>
</feature>
<feature type="binding site" evidence="2">
    <location>
        <position position="103"/>
    </location>
    <ligand>
        <name>Mg(2+)</name>
        <dbReference type="ChEBI" id="CHEBI:18420"/>
        <label>2</label>
    </ligand>
</feature>
<feature type="binding site" evidence="2">
    <location>
        <position position="108"/>
    </location>
    <ligand>
        <name>dimethylallyl diphosphate</name>
        <dbReference type="ChEBI" id="CHEBI:57623"/>
    </ligand>
</feature>
<feature type="binding site" evidence="2">
    <location>
        <position position="109"/>
    </location>
    <ligand>
        <name>isopentenyl diphosphate</name>
        <dbReference type="ChEBI" id="CHEBI:128769"/>
    </ligand>
</feature>
<feature type="binding site" evidence="2">
    <location>
        <position position="196"/>
    </location>
    <ligand>
        <name>dimethylallyl diphosphate</name>
        <dbReference type="ChEBI" id="CHEBI:57623"/>
    </ligand>
</feature>
<feature type="binding site" evidence="2">
    <location>
        <position position="197"/>
    </location>
    <ligand>
        <name>dimethylallyl diphosphate</name>
        <dbReference type="ChEBI" id="CHEBI:57623"/>
    </ligand>
</feature>
<feature type="binding site" evidence="2">
    <location>
        <position position="236"/>
    </location>
    <ligand>
        <name>dimethylallyl diphosphate</name>
        <dbReference type="ChEBI" id="CHEBI:57623"/>
    </ligand>
</feature>
<feature type="binding site" evidence="2">
    <location>
        <position position="253"/>
    </location>
    <ligand>
        <name>dimethylallyl diphosphate</name>
        <dbReference type="ChEBI" id="CHEBI:57623"/>
    </ligand>
</feature>
<feature type="binding site" evidence="2">
    <location>
        <position position="262"/>
    </location>
    <ligand>
        <name>dimethylallyl diphosphate</name>
        <dbReference type="ChEBI" id="CHEBI:57623"/>
    </ligand>
</feature>
<gene>
    <name evidence="7" type="primary">vrtD</name>
</gene>
<keyword id="KW-0460">Magnesium</keyword>
<keyword id="KW-0479">Metal-binding</keyword>
<keyword id="KW-0808">Transferase</keyword>
<dbReference type="EC" id="2.5.1.10" evidence="1 8"/>
<dbReference type="EC" id="2.5.1.1" evidence="1"/>
<dbReference type="EMBL" id="GU574477">
    <property type="protein sequence ID" value="ADI24929.1"/>
    <property type="molecule type" value="Genomic_DNA"/>
</dbReference>
<dbReference type="SMR" id="D7PHZ5"/>
<dbReference type="BioCyc" id="MetaCyc:MONOMER-19278"/>
<dbReference type="UniPathway" id="UPA00213"/>
<dbReference type="GO" id="GO:0005737">
    <property type="term" value="C:cytoplasm"/>
    <property type="evidence" value="ECO:0007669"/>
    <property type="project" value="TreeGrafter"/>
</dbReference>
<dbReference type="GO" id="GO:0004337">
    <property type="term" value="F:(2E,6E)-farnesyl diphosphate synthase activity"/>
    <property type="evidence" value="ECO:0007669"/>
    <property type="project" value="UniProtKB-EC"/>
</dbReference>
<dbReference type="GO" id="GO:0004161">
    <property type="term" value="F:dimethylallyltranstransferase activity"/>
    <property type="evidence" value="ECO:0007669"/>
    <property type="project" value="UniProtKB-EC"/>
</dbReference>
<dbReference type="GO" id="GO:0046872">
    <property type="term" value="F:metal ion binding"/>
    <property type="evidence" value="ECO:0007669"/>
    <property type="project" value="UniProtKB-KW"/>
</dbReference>
<dbReference type="GO" id="GO:0045337">
    <property type="term" value="P:farnesyl diphosphate biosynthetic process"/>
    <property type="evidence" value="ECO:0007669"/>
    <property type="project" value="TreeGrafter"/>
</dbReference>
<dbReference type="GO" id="GO:0140872">
    <property type="term" value="P:viridicatumtoxin biosynthetic process"/>
    <property type="evidence" value="ECO:0000304"/>
    <property type="project" value="GO_Central"/>
</dbReference>
<dbReference type="CDD" id="cd00685">
    <property type="entry name" value="Trans_IPPS_HT"/>
    <property type="match status" value="1"/>
</dbReference>
<dbReference type="Gene3D" id="1.10.600.10">
    <property type="entry name" value="Farnesyl Diphosphate Synthase"/>
    <property type="match status" value="1"/>
</dbReference>
<dbReference type="InterPro" id="IPR039702">
    <property type="entry name" value="FPS1-like"/>
</dbReference>
<dbReference type="InterPro" id="IPR008949">
    <property type="entry name" value="Isoprenoid_synthase_dom_sf"/>
</dbReference>
<dbReference type="InterPro" id="IPR000092">
    <property type="entry name" value="Polyprenyl_synt"/>
</dbReference>
<dbReference type="InterPro" id="IPR033749">
    <property type="entry name" value="Polyprenyl_synt_CS"/>
</dbReference>
<dbReference type="PANTHER" id="PTHR11525:SF0">
    <property type="entry name" value="FARNESYL PYROPHOSPHATE SYNTHASE"/>
    <property type="match status" value="1"/>
</dbReference>
<dbReference type="PANTHER" id="PTHR11525">
    <property type="entry name" value="FARNESYL-PYROPHOSPHATE SYNTHETASE"/>
    <property type="match status" value="1"/>
</dbReference>
<dbReference type="Pfam" id="PF00348">
    <property type="entry name" value="polyprenyl_synt"/>
    <property type="match status" value="1"/>
</dbReference>
<dbReference type="SFLD" id="SFLDS00005">
    <property type="entry name" value="Isoprenoid_Synthase_Type_I"/>
    <property type="match status" value="1"/>
</dbReference>
<dbReference type="SFLD" id="SFLDG01017">
    <property type="entry name" value="Polyprenyl_Transferase_Like"/>
    <property type="match status" value="1"/>
</dbReference>
<dbReference type="SUPFAM" id="SSF48576">
    <property type="entry name" value="Terpenoid synthases"/>
    <property type="match status" value="1"/>
</dbReference>
<dbReference type="PROSITE" id="PS00723">
    <property type="entry name" value="POLYPRENYL_SYNTHASE_1"/>
    <property type="match status" value="1"/>
</dbReference>
<dbReference type="PROSITE" id="PS00444">
    <property type="entry name" value="POLYPRENYL_SYNTHASE_2"/>
    <property type="match status" value="1"/>
</dbReference>
<proteinExistence type="evidence at protein level"/>
<accession>D7PHZ5</accession>
<organism>
    <name type="scientific">Penicillium aethiopicum</name>
    <dbReference type="NCBI Taxonomy" id="36650"/>
    <lineage>
        <taxon>Eukaryota</taxon>
        <taxon>Fungi</taxon>
        <taxon>Dikarya</taxon>
        <taxon>Ascomycota</taxon>
        <taxon>Pezizomycotina</taxon>
        <taxon>Eurotiomycetes</taxon>
        <taxon>Eurotiomycetidae</taxon>
        <taxon>Eurotiales</taxon>
        <taxon>Aspergillaceae</taxon>
        <taxon>Penicillium</taxon>
    </lineage>
</organism>
<name>VRTD_PENAE</name>
<protein>
    <recommendedName>
        <fullName evidence="1">Farnesyl pyrophosphate synthase vrtD</fullName>
        <shortName evidence="1">FPP synthase</shortName>
        <shortName evidence="1">FPS</shortName>
        <ecNumber evidence="1 8">2.5.1.10</ecNumber>
    </recommendedName>
    <alternativeName>
        <fullName evidence="1 8">(2E,6E)-farnesyl diphosphate synthase</fullName>
    </alternativeName>
    <alternativeName>
        <fullName evidence="1">Dimethylallyltranstransferase</fullName>
        <ecNumber evidence="1">2.5.1.1</ecNumber>
    </alternativeName>
    <alternativeName>
        <fullName evidence="1 8">Farnesyl diphosphate synthase</fullName>
    </alternativeName>
    <alternativeName>
        <fullName evidence="7">Viridicatumtoxin synthesis protein D</fullName>
    </alternativeName>
</protein>